<organism>
    <name type="scientific">Geotalea uraniireducens (strain Rf4)</name>
    <name type="common">Geobacter uraniireducens</name>
    <dbReference type="NCBI Taxonomy" id="351605"/>
    <lineage>
        <taxon>Bacteria</taxon>
        <taxon>Pseudomonadati</taxon>
        <taxon>Thermodesulfobacteriota</taxon>
        <taxon>Desulfuromonadia</taxon>
        <taxon>Geobacterales</taxon>
        <taxon>Geobacteraceae</taxon>
        <taxon>Geotalea</taxon>
    </lineage>
</organism>
<accession>A5G4G0</accession>
<keyword id="KW-0067">ATP-binding</keyword>
<keyword id="KW-0173">Coenzyme A biosynthesis</keyword>
<keyword id="KW-0963">Cytoplasm</keyword>
<keyword id="KW-0460">Magnesium</keyword>
<keyword id="KW-0547">Nucleotide-binding</keyword>
<keyword id="KW-0548">Nucleotidyltransferase</keyword>
<keyword id="KW-1185">Reference proteome</keyword>
<keyword id="KW-0808">Transferase</keyword>
<comment type="function">
    <text evidence="1">Reversibly transfers an adenylyl group from ATP to 4'-phosphopantetheine, yielding dephospho-CoA (dPCoA) and pyrophosphate.</text>
</comment>
<comment type="catalytic activity">
    <reaction evidence="1">
        <text>(R)-4'-phosphopantetheine + ATP + H(+) = 3'-dephospho-CoA + diphosphate</text>
        <dbReference type="Rhea" id="RHEA:19801"/>
        <dbReference type="ChEBI" id="CHEBI:15378"/>
        <dbReference type="ChEBI" id="CHEBI:30616"/>
        <dbReference type="ChEBI" id="CHEBI:33019"/>
        <dbReference type="ChEBI" id="CHEBI:57328"/>
        <dbReference type="ChEBI" id="CHEBI:61723"/>
        <dbReference type="EC" id="2.7.7.3"/>
    </reaction>
</comment>
<comment type="cofactor">
    <cofactor evidence="1">
        <name>Mg(2+)</name>
        <dbReference type="ChEBI" id="CHEBI:18420"/>
    </cofactor>
</comment>
<comment type="pathway">
    <text evidence="1">Cofactor biosynthesis; coenzyme A biosynthesis; CoA from (R)-pantothenate: step 4/5.</text>
</comment>
<comment type="subunit">
    <text evidence="1">Homohexamer.</text>
</comment>
<comment type="subcellular location">
    <subcellularLocation>
        <location evidence="1">Cytoplasm</location>
    </subcellularLocation>
</comment>
<comment type="similarity">
    <text evidence="1">Belongs to the bacterial CoaD family.</text>
</comment>
<reference key="1">
    <citation type="submission" date="2007-05" db="EMBL/GenBank/DDBJ databases">
        <title>Complete sequence of Geobacter uraniireducens Rf4.</title>
        <authorList>
            <consortium name="US DOE Joint Genome Institute"/>
            <person name="Copeland A."/>
            <person name="Lucas S."/>
            <person name="Lapidus A."/>
            <person name="Barry K."/>
            <person name="Detter J.C."/>
            <person name="Glavina del Rio T."/>
            <person name="Hammon N."/>
            <person name="Israni S."/>
            <person name="Dalin E."/>
            <person name="Tice H."/>
            <person name="Pitluck S."/>
            <person name="Chertkov O."/>
            <person name="Brettin T."/>
            <person name="Bruce D."/>
            <person name="Han C."/>
            <person name="Schmutz J."/>
            <person name="Larimer F."/>
            <person name="Land M."/>
            <person name="Hauser L."/>
            <person name="Kyrpides N."/>
            <person name="Mikhailova N."/>
            <person name="Shelobolina E."/>
            <person name="Aklujkar M."/>
            <person name="Lovley D."/>
            <person name="Richardson P."/>
        </authorList>
    </citation>
    <scope>NUCLEOTIDE SEQUENCE [LARGE SCALE GENOMIC DNA]</scope>
    <source>
        <strain>ATCC BAA-1134 / JCM 13001 / Rf4</strain>
    </source>
</reference>
<evidence type="ECO:0000255" key="1">
    <source>
        <dbReference type="HAMAP-Rule" id="MF_00151"/>
    </source>
</evidence>
<name>COAD_GEOUR</name>
<gene>
    <name evidence="1" type="primary">coaD</name>
    <name type="ordered locus">Gura_2500</name>
</gene>
<proteinExistence type="inferred from homology"/>
<protein>
    <recommendedName>
        <fullName evidence="1">Phosphopantetheine adenylyltransferase</fullName>
        <ecNumber evidence="1">2.7.7.3</ecNumber>
    </recommendedName>
    <alternativeName>
        <fullName evidence="1">Dephospho-CoA pyrophosphorylase</fullName>
    </alternativeName>
    <alternativeName>
        <fullName evidence="1">Pantetheine-phosphate adenylyltransferase</fullName>
        <shortName evidence="1">PPAT</shortName>
    </alternativeName>
</protein>
<feature type="chain" id="PRO_1000076768" description="Phosphopantetheine adenylyltransferase">
    <location>
        <begin position="1"/>
        <end position="162"/>
    </location>
</feature>
<feature type="binding site" evidence="1">
    <location>
        <begin position="11"/>
        <end position="12"/>
    </location>
    <ligand>
        <name>ATP</name>
        <dbReference type="ChEBI" id="CHEBI:30616"/>
    </ligand>
</feature>
<feature type="binding site" evidence="1">
    <location>
        <position position="11"/>
    </location>
    <ligand>
        <name>substrate</name>
    </ligand>
</feature>
<feature type="binding site" evidence="1">
    <location>
        <position position="19"/>
    </location>
    <ligand>
        <name>ATP</name>
        <dbReference type="ChEBI" id="CHEBI:30616"/>
    </ligand>
</feature>
<feature type="binding site" evidence="1">
    <location>
        <position position="43"/>
    </location>
    <ligand>
        <name>substrate</name>
    </ligand>
</feature>
<feature type="binding site" evidence="1">
    <location>
        <position position="75"/>
    </location>
    <ligand>
        <name>substrate</name>
    </ligand>
</feature>
<feature type="binding site" evidence="1">
    <location>
        <position position="89"/>
    </location>
    <ligand>
        <name>substrate</name>
    </ligand>
</feature>
<feature type="binding site" evidence="1">
    <location>
        <begin position="90"/>
        <end position="92"/>
    </location>
    <ligand>
        <name>ATP</name>
        <dbReference type="ChEBI" id="CHEBI:30616"/>
    </ligand>
</feature>
<feature type="binding site" evidence="1">
    <location>
        <position position="100"/>
    </location>
    <ligand>
        <name>ATP</name>
        <dbReference type="ChEBI" id="CHEBI:30616"/>
    </ligand>
</feature>
<feature type="binding site" evidence="1">
    <location>
        <begin position="125"/>
        <end position="131"/>
    </location>
    <ligand>
        <name>ATP</name>
        <dbReference type="ChEBI" id="CHEBI:30616"/>
    </ligand>
</feature>
<feature type="site" description="Transition state stabilizer" evidence="1">
    <location>
        <position position="19"/>
    </location>
</feature>
<sequence>MPLKKAVYPGSFDPITYGHIDIIERGLKVFDTVIVAVARNSEKNSLFNVEERIALIREVLGDNSRAKVDTFDGLLVDYVRKQGATVIIRGLRAVSDFEYEFQLAQMNRSITQEVETLFMMTSVPYSYLSSSIVKEVSSLNGPIDGLVPPLVKKALDAKFNRS</sequence>
<dbReference type="EC" id="2.7.7.3" evidence="1"/>
<dbReference type="EMBL" id="CP000698">
    <property type="protein sequence ID" value="ABQ26678.1"/>
    <property type="molecule type" value="Genomic_DNA"/>
</dbReference>
<dbReference type="RefSeq" id="WP_011939365.1">
    <property type="nucleotide sequence ID" value="NC_009483.1"/>
</dbReference>
<dbReference type="SMR" id="A5G4G0"/>
<dbReference type="STRING" id="351605.Gura_2500"/>
<dbReference type="KEGG" id="gur:Gura_2500"/>
<dbReference type="HOGENOM" id="CLU_100149_0_1_7"/>
<dbReference type="OrthoDB" id="9806661at2"/>
<dbReference type="UniPathway" id="UPA00241">
    <property type="reaction ID" value="UER00355"/>
</dbReference>
<dbReference type="Proteomes" id="UP000006695">
    <property type="component" value="Chromosome"/>
</dbReference>
<dbReference type="GO" id="GO:0005737">
    <property type="term" value="C:cytoplasm"/>
    <property type="evidence" value="ECO:0007669"/>
    <property type="project" value="UniProtKB-SubCell"/>
</dbReference>
<dbReference type="GO" id="GO:0005524">
    <property type="term" value="F:ATP binding"/>
    <property type="evidence" value="ECO:0007669"/>
    <property type="project" value="UniProtKB-KW"/>
</dbReference>
<dbReference type="GO" id="GO:0004595">
    <property type="term" value="F:pantetheine-phosphate adenylyltransferase activity"/>
    <property type="evidence" value="ECO:0007669"/>
    <property type="project" value="UniProtKB-UniRule"/>
</dbReference>
<dbReference type="GO" id="GO:0015937">
    <property type="term" value="P:coenzyme A biosynthetic process"/>
    <property type="evidence" value="ECO:0007669"/>
    <property type="project" value="UniProtKB-UniRule"/>
</dbReference>
<dbReference type="CDD" id="cd02163">
    <property type="entry name" value="PPAT"/>
    <property type="match status" value="1"/>
</dbReference>
<dbReference type="Gene3D" id="3.40.50.620">
    <property type="entry name" value="HUPs"/>
    <property type="match status" value="1"/>
</dbReference>
<dbReference type="HAMAP" id="MF_00151">
    <property type="entry name" value="PPAT_bact"/>
    <property type="match status" value="1"/>
</dbReference>
<dbReference type="InterPro" id="IPR004821">
    <property type="entry name" value="Cyt_trans-like"/>
</dbReference>
<dbReference type="InterPro" id="IPR001980">
    <property type="entry name" value="PPAT"/>
</dbReference>
<dbReference type="InterPro" id="IPR014729">
    <property type="entry name" value="Rossmann-like_a/b/a_fold"/>
</dbReference>
<dbReference type="NCBIfam" id="TIGR01510">
    <property type="entry name" value="coaD_prev_kdtB"/>
    <property type="match status" value="1"/>
</dbReference>
<dbReference type="NCBIfam" id="TIGR00125">
    <property type="entry name" value="cyt_tran_rel"/>
    <property type="match status" value="1"/>
</dbReference>
<dbReference type="PANTHER" id="PTHR21342">
    <property type="entry name" value="PHOSPHOPANTETHEINE ADENYLYLTRANSFERASE"/>
    <property type="match status" value="1"/>
</dbReference>
<dbReference type="PANTHER" id="PTHR21342:SF1">
    <property type="entry name" value="PHOSPHOPANTETHEINE ADENYLYLTRANSFERASE"/>
    <property type="match status" value="1"/>
</dbReference>
<dbReference type="Pfam" id="PF01467">
    <property type="entry name" value="CTP_transf_like"/>
    <property type="match status" value="1"/>
</dbReference>
<dbReference type="PRINTS" id="PR01020">
    <property type="entry name" value="LPSBIOSNTHSS"/>
</dbReference>
<dbReference type="SUPFAM" id="SSF52374">
    <property type="entry name" value="Nucleotidylyl transferase"/>
    <property type="match status" value="1"/>
</dbReference>